<sequence>MNRFIDRVVLHLAAGDGGNGCVSVHREKFKPLGGPDGGNGGHGGDIILEVSPQVHTLLDFHYHPHVKAPRGANGAGDNRSGARGEDLILEVPAGTVVLNSKGETLADLTTVGMKFIAAAGGQGGLGNAALASRARKAPGFALNGEPGEQHDLILELKSMADVGLVGFPSAGKSSLISVMSAAKPKIGDYPFTTLQPNLGVVEVGHQTFIMADVPGLIPGASEGKGLGLDFLRHIERTSVLVHVVDTASMDPGRDPISDIEALEAELAAYQSALDEDTGLGDLDKRPRVVVLNKADVPEALELAEFLKGDIEQQFGWPVFIVSAVAQRGLDPLKYKLLEIVQQARKKRPKEKLAESVIIKPKPVDGRRRREEFEIRKDPDNPGGFLVVGEKPERWILQTDFENDEAVGYLADRLAKLGVEDKLRKAGAQTGSEVTIGGVTFEWEPMTSAVDTAASPRGTDIRLEKNERISAAERKRASQVRRGLIDEFDYGDGEEASRERWEG</sequence>
<protein>
    <recommendedName>
        <fullName evidence="1">GTPase Obg</fullName>
        <ecNumber evidence="1">3.6.5.-</ecNumber>
    </recommendedName>
    <alternativeName>
        <fullName evidence="1">GTP-binding protein Obg</fullName>
    </alternativeName>
</protein>
<dbReference type="EC" id="3.6.5.-" evidence="1"/>
<dbReference type="EMBL" id="BA000035">
    <property type="protein sequence ID" value="BAC19076.1"/>
    <property type="status" value="ALT_INIT"/>
    <property type="molecule type" value="Genomic_DNA"/>
</dbReference>
<dbReference type="RefSeq" id="WP_006768270.1">
    <property type="nucleotide sequence ID" value="NC_004369.1"/>
</dbReference>
<dbReference type="SMR" id="Q8FN81"/>
<dbReference type="STRING" id="196164.gene:10742697"/>
<dbReference type="KEGG" id="cef:CE2266"/>
<dbReference type="eggNOG" id="COG0536">
    <property type="taxonomic scope" value="Bacteria"/>
</dbReference>
<dbReference type="HOGENOM" id="CLU_011747_0_0_11"/>
<dbReference type="OrthoDB" id="9807318at2"/>
<dbReference type="Proteomes" id="UP000001409">
    <property type="component" value="Chromosome"/>
</dbReference>
<dbReference type="GO" id="GO:0005737">
    <property type="term" value="C:cytoplasm"/>
    <property type="evidence" value="ECO:0007669"/>
    <property type="project" value="UniProtKB-SubCell"/>
</dbReference>
<dbReference type="GO" id="GO:0005525">
    <property type="term" value="F:GTP binding"/>
    <property type="evidence" value="ECO:0007669"/>
    <property type="project" value="UniProtKB-UniRule"/>
</dbReference>
<dbReference type="GO" id="GO:0003924">
    <property type="term" value="F:GTPase activity"/>
    <property type="evidence" value="ECO:0007669"/>
    <property type="project" value="UniProtKB-UniRule"/>
</dbReference>
<dbReference type="GO" id="GO:0000287">
    <property type="term" value="F:magnesium ion binding"/>
    <property type="evidence" value="ECO:0007669"/>
    <property type="project" value="InterPro"/>
</dbReference>
<dbReference type="GO" id="GO:0042254">
    <property type="term" value="P:ribosome biogenesis"/>
    <property type="evidence" value="ECO:0007669"/>
    <property type="project" value="UniProtKB-UniRule"/>
</dbReference>
<dbReference type="CDD" id="cd01898">
    <property type="entry name" value="Obg"/>
    <property type="match status" value="1"/>
</dbReference>
<dbReference type="FunFam" id="2.70.210.12:FF:000001">
    <property type="entry name" value="GTPase Obg"/>
    <property type="match status" value="1"/>
</dbReference>
<dbReference type="Gene3D" id="3.30.300.350">
    <property type="entry name" value="GTP-binding protein OBG, C-terminal domain"/>
    <property type="match status" value="1"/>
</dbReference>
<dbReference type="Gene3D" id="2.70.210.12">
    <property type="entry name" value="GTP1/OBG domain"/>
    <property type="match status" value="1"/>
</dbReference>
<dbReference type="Gene3D" id="3.40.50.300">
    <property type="entry name" value="P-loop containing nucleotide triphosphate hydrolases"/>
    <property type="match status" value="1"/>
</dbReference>
<dbReference type="HAMAP" id="MF_01454">
    <property type="entry name" value="GTPase_Obg"/>
    <property type="match status" value="1"/>
</dbReference>
<dbReference type="InterPro" id="IPR031167">
    <property type="entry name" value="G_OBG"/>
</dbReference>
<dbReference type="InterPro" id="IPR006073">
    <property type="entry name" value="GTP-bd"/>
</dbReference>
<dbReference type="InterPro" id="IPR014100">
    <property type="entry name" value="GTP-bd_Obg/CgtA"/>
</dbReference>
<dbReference type="InterPro" id="IPR036346">
    <property type="entry name" value="GTP-bd_prot_GTP1/OBG_C_sf"/>
</dbReference>
<dbReference type="InterPro" id="IPR006074">
    <property type="entry name" value="GTP1-OBG_CS"/>
</dbReference>
<dbReference type="InterPro" id="IPR006169">
    <property type="entry name" value="GTP1_OBG_dom"/>
</dbReference>
<dbReference type="InterPro" id="IPR036726">
    <property type="entry name" value="GTP1_OBG_dom_sf"/>
</dbReference>
<dbReference type="InterPro" id="IPR045086">
    <property type="entry name" value="OBG_GTPase"/>
</dbReference>
<dbReference type="InterPro" id="IPR015349">
    <property type="entry name" value="OCT_dom"/>
</dbReference>
<dbReference type="InterPro" id="IPR027417">
    <property type="entry name" value="P-loop_NTPase"/>
</dbReference>
<dbReference type="NCBIfam" id="TIGR02729">
    <property type="entry name" value="Obg_CgtA"/>
    <property type="match status" value="1"/>
</dbReference>
<dbReference type="NCBIfam" id="TIGR03595">
    <property type="entry name" value="Obg_CgtA_exten"/>
    <property type="match status" value="1"/>
</dbReference>
<dbReference type="NCBIfam" id="NF008954">
    <property type="entry name" value="PRK12296.1"/>
    <property type="match status" value="1"/>
</dbReference>
<dbReference type="NCBIfam" id="NF008955">
    <property type="entry name" value="PRK12297.1"/>
    <property type="match status" value="1"/>
</dbReference>
<dbReference type="NCBIfam" id="NF008956">
    <property type="entry name" value="PRK12299.1"/>
    <property type="match status" value="1"/>
</dbReference>
<dbReference type="PANTHER" id="PTHR11702">
    <property type="entry name" value="DEVELOPMENTALLY REGULATED GTP-BINDING PROTEIN-RELATED"/>
    <property type="match status" value="1"/>
</dbReference>
<dbReference type="PANTHER" id="PTHR11702:SF31">
    <property type="entry name" value="MITOCHONDRIAL RIBOSOME-ASSOCIATED GTPASE 2"/>
    <property type="match status" value="1"/>
</dbReference>
<dbReference type="Pfam" id="PF09269">
    <property type="entry name" value="DUF1967"/>
    <property type="match status" value="1"/>
</dbReference>
<dbReference type="Pfam" id="PF01018">
    <property type="entry name" value="GTP1_OBG"/>
    <property type="match status" value="1"/>
</dbReference>
<dbReference type="Pfam" id="PF01926">
    <property type="entry name" value="MMR_HSR1"/>
    <property type="match status" value="1"/>
</dbReference>
<dbReference type="PRINTS" id="PR00326">
    <property type="entry name" value="GTP1OBG"/>
</dbReference>
<dbReference type="SUPFAM" id="SSF102741">
    <property type="entry name" value="Obg GTP-binding protein C-terminal domain"/>
    <property type="match status" value="1"/>
</dbReference>
<dbReference type="SUPFAM" id="SSF82051">
    <property type="entry name" value="Obg GTP-binding protein N-terminal domain"/>
    <property type="match status" value="1"/>
</dbReference>
<dbReference type="SUPFAM" id="SSF52540">
    <property type="entry name" value="P-loop containing nucleoside triphosphate hydrolases"/>
    <property type="match status" value="1"/>
</dbReference>
<dbReference type="PROSITE" id="PS51710">
    <property type="entry name" value="G_OBG"/>
    <property type="match status" value="1"/>
</dbReference>
<dbReference type="PROSITE" id="PS00905">
    <property type="entry name" value="GTP1_OBG"/>
    <property type="match status" value="1"/>
</dbReference>
<dbReference type="PROSITE" id="PS51883">
    <property type="entry name" value="OBG"/>
    <property type="match status" value="1"/>
</dbReference>
<dbReference type="PROSITE" id="PS51881">
    <property type="entry name" value="OCT"/>
    <property type="match status" value="1"/>
</dbReference>
<name>OBG_COREF</name>
<feature type="chain" id="PRO_0000385859" description="GTPase Obg">
    <location>
        <begin position="1"/>
        <end position="502"/>
    </location>
</feature>
<feature type="domain" description="Obg" evidence="3">
    <location>
        <begin position="2"/>
        <end position="159"/>
    </location>
</feature>
<feature type="domain" description="OBG-type G" evidence="1">
    <location>
        <begin position="160"/>
        <end position="341"/>
    </location>
</feature>
<feature type="domain" description="OCT" evidence="2">
    <location>
        <begin position="364"/>
        <end position="444"/>
    </location>
</feature>
<feature type="binding site" evidence="1">
    <location>
        <begin position="166"/>
        <end position="173"/>
    </location>
    <ligand>
        <name>GTP</name>
        <dbReference type="ChEBI" id="CHEBI:37565"/>
    </ligand>
</feature>
<feature type="binding site" evidence="1">
    <location>
        <position position="173"/>
    </location>
    <ligand>
        <name>Mg(2+)</name>
        <dbReference type="ChEBI" id="CHEBI:18420"/>
    </ligand>
</feature>
<feature type="binding site" evidence="1">
    <location>
        <begin position="191"/>
        <end position="195"/>
    </location>
    <ligand>
        <name>GTP</name>
        <dbReference type="ChEBI" id="CHEBI:37565"/>
    </ligand>
</feature>
<feature type="binding site" evidence="1">
    <location>
        <position position="193"/>
    </location>
    <ligand>
        <name>Mg(2+)</name>
        <dbReference type="ChEBI" id="CHEBI:18420"/>
    </ligand>
</feature>
<feature type="binding site" evidence="1">
    <location>
        <begin position="212"/>
        <end position="215"/>
    </location>
    <ligand>
        <name>GTP</name>
        <dbReference type="ChEBI" id="CHEBI:37565"/>
    </ligand>
</feature>
<feature type="binding site" evidence="1">
    <location>
        <begin position="292"/>
        <end position="295"/>
    </location>
    <ligand>
        <name>GTP</name>
        <dbReference type="ChEBI" id="CHEBI:37565"/>
    </ligand>
</feature>
<feature type="binding site" evidence="1">
    <location>
        <begin position="322"/>
        <end position="324"/>
    </location>
    <ligand>
        <name>GTP</name>
        <dbReference type="ChEBI" id="CHEBI:37565"/>
    </ligand>
</feature>
<organism>
    <name type="scientific">Corynebacterium efficiens (strain DSM 44549 / YS-314 / AJ 12310 / JCM 11189 / NBRC 100395)</name>
    <dbReference type="NCBI Taxonomy" id="196164"/>
    <lineage>
        <taxon>Bacteria</taxon>
        <taxon>Bacillati</taxon>
        <taxon>Actinomycetota</taxon>
        <taxon>Actinomycetes</taxon>
        <taxon>Mycobacteriales</taxon>
        <taxon>Corynebacteriaceae</taxon>
        <taxon>Corynebacterium</taxon>
    </lineage>
</organism>
<reference key="1">
    <citation type="journal article" date="2003" name="Genome Res.">
        <title>Comparative complete genome sequence analysis of the amino acid replacements responsible for the thermostability of Corynebacterium efficiens.</title>
        <authorList>
            <person name="Nishio Y."/>
            <person name="Nakamura Y."/>
            <person name="Kawarabayasi Y."/>
            <person name="Usuda Y."/>
            <person name="Kimura E."/>
            <person name="Sugimoto S."/>
            <person name="Matsui K."/>
            <person name="Yamagishi A."/>
            <person name="Kikuchi H."/>
            <person name="Ikeo K."/>
            <person name="Gojobori T."/>
        </authorList>
    </citation>
    <scope>NUCLEOTIDE SEQUENCE [LARGE SCALE GENOMIC DNA]</scope>
    <source>
        <strain>DSM 44549 / YS-314 / AJ 12310 / JCM 11189 / NBRC 100395</strain>
    </source>
</reference>
<comment type="function">
    <text evidence="1">An essential GTPase which binds GTP, GDP and possibly (p)ppGpp with moderate affinity, with high nucleotide exchange rates and a fairly low GTP hydrolysis rate. Plays a role in control of the cell cycle, stress response, ribosome biogenesis and in those bacteria that undergo differentiation, in morphogenesis control.</text>
</comment>
<comment type="cofactor">
    <cofactor evidence="1">
        <name>Mg(2+)</name>
        <dbReference type="ChEBI" id="CHEBI:18420"/>
    </cofactor>
</comment>
<comment type="subunit">
    <text evidence="1">Monomer.</text>
</comment>
<comment type="subcellular location">
    <subcellularLocation>
        <location evidence="1">Cytoplasm</location>
    </subcellularLocation>
</comment>
<comment type="similarity">
    <text evidence="1">Belongs to the TRAFAC class OBG-HflX-like GTPase superfamily. OBG GTPase family.</text>
</comment>
<comment type="sequence caution" evidence="4">
    <conflict type="erroneous initiation">
        <sequence resource="EMBL-CDS" id="BAC19076"/>
    </conflict>
    <text>Extended N-terminus.</text>
</comment>
<evidence type="ECO:0000255" key="1">
    <source>
        <dbReference type="HAMAP-Rule" id="MF_01454"/>
    </source>
</evidence>
<evidence type="ECO:0000255" key="2">
    <source>
        <dbReference type="PROSITE-ProRule" id="PRU01229"/>
    </source>
</evidence>
<evidence type="ECO:0000255" key="3">
    <source>
        <dbReference type="PROSITE-ProRule" id="PRU01231"/>
    </source>
</evidence>
<evidence type="ECO:0000305" key="4"/>
<keyword id="KW-0963">Cytoplasm</keyword>
<keyword id="KW-0342">GTP-binding</keyword>
<keyword id="KW-0378">Hydrolase</keyword>
<keyword id="KW-0460">Magnesium</keyword>
<keyword id="KW-0479">Metal-binding</keyword>
<keyword id="KW-0547">Nucleotide-binding</keyword>
<keyword id="KW-1185">Reference proteome</keyword>
<accession>Q8FN81</accession>
<gene>
    <name evidence="1" type="primary">obg</name>
    <name type="ordered locus">CE2266</name>
</gene>
<proteinExistence type="inferred from homology"/>